<sequence>MNPTTEQVLSPGEIFRQTREALNLSLEDVAKEITLRPSILEQLENNEFIQKSTPAIFVKGYVRSYAKFLRLPDSVWENIVFAETEKNDLGKNARSTRAVNQYSSHNRWIGRLTAIVFMIVIGMTGLWWWQSYQQNTQERDDLVQSYVASTENNQPATALVTTEESNKTVPETAAPVSQPVEITNNLLPEIAQENSVSQPKNDEKSVSEIQSAVENPSISPTLPIAKGDLVIEILTNSSWISVKDNARHVLAQKEYKQGEILTFNGNEFSLIVGAPSNVRITYKGENYPLKVDGRVAKFKLSQP</sequence>
<reference key="1">
    <citation type="journal article" date="1995" name="Science">
        <title>Whole-genome random sequencing and assembly of Haemophilus influenzae Rd.</title>
        <authorList>
            <person name="Fleischmann R.D."/>
            <person name="Adams M.D."/>
            <person name="White O."/>
            <person name="Clayton R.A."/>
            <person name="Kirkness E.F."/>
            <person name="Kerlavage A.R."/>
            <person name="Bult C.J."/>
            <person name="Tomb J.-F."/>
            <person name="Dougherty B.A."/>
            <person name="Merrick J.M."/>
            <person name="McKenney K."/>
            <person name="Sutton G.G."/>
            <person name="FitzHugh W."/>
            <person name="Fields C.A."/>
            <person name="Gocayne J.D."/>
            <person name="Scott J.D."/>
            <person name="Shirley R."/>
            <person name="Liu L.-I."/>
            <person name="Glodek A."/>
            <person name="Kelley J.M."/>
            <person name="Weidman J.F."/>
            <person name="Phillips C.A."/>
            <person name="Spriggs T."/>
            <person name="Hedblom E."/>
            <person name="Cotton M.D."/>
            <person name="Utterback T.R."/>
            <person name="Hanna M.C."/>
            <person name="Nguyen D.T."/>
            <person name="Saudek D.M."/>
            <person name="Brandon R.C."/>
            <person name="Fine L.D."/>
            <person name="Fritchman J.L."/>
            <person name="Fuhrmann J.L."/>
            <person name="Geoghagen N.S.M."/>
            <person name="Gnehm C.L."/>
            <person name="McDonald L.A."/>
            <person name="Small K.V."/>
            <person name="Fraser C.M."/>
            <person name="Smith H.O."/>
            <person name="Venter J.C."/>
        </authorList>
    </citation>
    <scope>NUCLEOTIDE SEQUENCE [LARGE SCALE GENOMIC DNA]</scope>
    <source>
        <strain>ATCC 51907 / DSM 11121 / KW20 / Rd</strain>
    </source>
</reference>
<accession>Q57065</accession>
<accession>O05019</accession>
<gene>
    <name type="ordered locus">HI_0367</name>
</gene>
<protein>
    <recommendedName>
        <fullName>Uncharacterized protein HI_0367</fullName>
    </recommendedName>
</protein>
<proteinExistence type="predicted"/>
<organism>
    <name type="scientific">Haemophilus influenzae (strain ATCC 51907 / DSM 11121 / KW20 / Rd)</name>
    <dbReference type="NCBI Taxonomy" id="71421"/>
    <lineage>
        <taxon>Bacteria</taxon>
        <taxon>Pseudomonadati</taxon>
        <taxon>Pseudomonadota</taxon>
        <taxon>Gammaproteobacteria</taxon>
        <taxon>Pasteurellales</taxon>
        <taxon>Pasteurellaceae</taxon>
        <taxon>Haemophilus</taxon>
    </lineage>
</organism>
<name>Y367_HAEIN</name>
<feature type="chain" id="PRO_0000077916" description="Uncharacterized protein HI_0367">
    <location>
        <begin position="1"/>
        <end position="303"/>
    </location>
</feature>
<dbReference type="EMBL" id="L42023">
    <property type="protein sequence ID" value="AAC22025.1"/>
    <property type="molecule type" value="Genomic_DNA"/>
</dbReference>
<dbReference type="PIR" id="A64150">
    <property type="entry name" value="A64150"/>
</dbReference>
<dbReference type="RefSeq" id="NP_438528.1">
    <property type="nucleotide sequence ID" value="NC_000907.1"/>
</dbReference>
<dbReference type="SMR" id="Q57065"/>
<dbReference type="STRING" id="71421.HI_0367"/>
<dbReference type="EnsemblBacteria" id="AAC22025">
    <property type="protein sequence ID" value="AAC22025"/>
    <property type="gene ID" value="HI_0367"/>
</dbReference>
<dbReference type="KEGG" id="hin:HI_0367"/>
<dbReference type="PATRIC" id="fig|71421.8.peg.385"/>
<dbReference type="eggNOG" id="COG1426">
    <property type="taxonomic scope" value="Bacteria"/>
</dbReference>
<dbReference type="HOGENOM" id="CLU_047530_3_1_6"/>
<dbReference type="OrthoDB" id="9790252at2"/>
<dbReference type="PhylomeDB" id="Q57065"/>
<dbReference type="BioCyc" id="HINF71421:G1GJ1-380-MONOMER"/>
<dbReference type="Proteomes" id="UP000000579">
    <property type="component" value="Chromosome"/>
</dbReference>
<dbReference type="GO" id="GO:0005886">
    <property type="term" value="C:plasma membrane"/>
    <property type="evidence" value="ECO:0000318"/>
    <property type="project" value="GO_Central"/>
</dbReference>
<dbReference type="GO" id="GO:0003677">
    <property type="term" value="F:DNA binding"/>
    <property type="evidence" value="ECO:0007669"/>
    <property type="project" value="InterPro"/>
</dbReference>
<dbReference type="CDD" id="cd00093">
    <property type="entry name" value="HTH_XRE"/>
    <property type="match status" value="1"/>
</dbReference>
<dbReference type="Gene3D" id="1.10.260.40">
    <property type="entry name" value="lambda repressor-like DNA-binding domains"/>
    <property type="match status" value="1"/>
</dbReference>
<dbReference type="InterPro" id="IPR050400">
    <property type="entry name" value="Bact_Cytoskel_RodZ"/>
</dbReference>
<dbReference type="InterPro" id="IPR001387">
    <property type="entry name" value="Cro/C1-type_HTH"/>
</dbReference>
<dbReference type="InterPro" id="IPR010982">
    <property type="entry name" value="Lambda_DNA-bd_dom_sf"/>
</dbReference>
<dbReference type="InterPro" id="IPR025194">
    <property type="entry name" value="RodZ-like_C"/>
</dbReference>
<dbReference type="PANTHER" id="PTHR34475">
    <property type="match status" value="1"/>
</dbReference>
<dbReference type="PANTHER" id="PTHR34475:SF1">
    <property type="entry name" value="CYTOSKELETON PROTEIN RODZ"/>
    <property type="match status" value="1"/>
</dbReference>
<dbReference type="Pfam" id="PF13413">
    <property type="entry name" value="HTH_25"/>
    <property type="match status" value="1"/>
</dbReference>
<dbReference type="Pfam" id="PF13464">
    <property type="entry name" value="RodZ_C"/>
    <property type="match status" value="1"/>
</dbReference>
<dbReference type="SUPFAM" id="SSF47413">
    <property type="entry name" value="lambda repressor-like DNA-binding domains"/>
    <property type="match status" value="1"/>
</dbReference>
<keyword id="KW-1185">Reference proteome</keyword>